<gene>
    <name evidence="1" type="primary">rpsS</name>
    <name type="ordered locus">Csac_2283</name>
</gene>
<name>RS19_CALS8</name>
<organism>
    <name type="scientific">Caldicellulosiruptor saccharolyticus (strain ATCC 43494 / DSM 8903 / Tp8T 6331)</name>
    <dbReference type="NCBI Taxonomy" id="351627"/>
    <lineage>
        <taxon>Bacteria</taxon>
        <taxon>Bacillati</taxon>
        <taxon>Bacillota</taxon>
        <taxon>Bacillota incertae sedis</taxon>
        <taxon>Caldicellulosiruptorales</taxon>
        <taxon>Caldicellulosiruptoraceae</taxon>
        <taxon>Caldicellulosiruptor</taxon>
    </lineage>
</organism>
<reference key="1">
    <citation type="submission" date="2007-04" db="EMBL/GenBank/DDBJ databases">
        <title>Genome sequence of the thermophilic hydrogen-producing bacterium Caldicellulosiruptor saccharolyticus DSM 8903.</title>
        <authorList>
            <person name="Copeland A."/>
            <person name="Lucas S."/>
            <person name="Lapidus A."/>
            <person name="Barry K."/>
            <person name="Detter J.C."/>
            <person name="Glavina del Rio T."/>
            <person name="Hammon N."/>
            <person name="Israni S."/>
            <person name="Dalin E."/>
            <person name="Tice H."/>
            <person name="Pitluck S."/>
            <person name="Kiss H."/>
            <person name="Brettin T."/>
            <person name="Bruce D."/>
            <person name="Han C."/>
            <person name="Schmutz J."/>
            <person name="Larimer F."/>
            <person name="Land M."/>
            <person name="Hauser L."/>
            <person name="Kyrpides N."/>
            <person name="Lykidis A."/>
            <person name="van de Werken H.J.G."/>
            <person name="Verhaart M.R.A."/>
            <person name="VanFossen A.L."/>
            <person name="Lewis D.L."/>
            <person name="Nichols J.D."/>
            <person name="Goorissen H.P."/>
            <person name="van Niel E.W.J."/>
            <person name="Stams F.J.M."/>
            <person name="Willquist K.U."/>
            <person name="Ward D.E."/>
            <person name="van der Oost J."/>
            <person name="Kelly R.M."/>
            <person name="Kengen S.M.W."/>
            <person name="Richardson P."/>
        </authorList>
    </citation>
    <scope>NUCLEOTIDE SEQUENCE [LARGE SCALE GENOMIC DNA]</scope>
    <source>
        <strain>ATCC 43494 / DSM 8903 / Tp8T 6331</strain>
    </source>
</reference>
<feature type="chain" id="PRO_1000051028" description="Small ribosomal subunit protein uS19">
    <location>
        <begin position="1"/>
        <end position="94"/>
    </location>
</feature>
<protein>
    <recommendedName>
        <fullName evidence="1">Small ribosomal subunit protein uS19</fullName>
    </recommendedName>
    <alternativeName>
        <fullName evidence="2">30S ribosomal protein S19</fullName>
    </alternativeName>
</protein>
<evidence type="ECO:0000255" key="1">
    <source>
        <dbReference type="HAMAP-Rule" id="MF_00531"/>
    </source>
</evidence>
<evidence type="ECO:0000305" key="2"/>
<dbReference type="EMBL" id="CP000679">
    <property type="protein sequence ID" value="ABP67861.1"/>
    <property type="molecule type" value="Genomic_DNA"/>
</dbReference>
<dbReference type="RefSeq" id="WP_011917787.1">
    <property type="nucleotide sequence ID" value="NC_009437.1"/>
</dbReference>
<dbReference type="SMR" id="A4XLS6"/>
<dbReference type="STRING" id="351627.Csac_2283"/>
<dbReference type="KEGG" id="csc:Csac_2283"/>
<dbReference type="eggNOG" id="COG0185">
    <property type="taxonomic scope" value="Bacteria"/>
</dbReference>
<dbReference type="HOGENOM" id="CLU_144911_0_1_9"/>
<dbReference type="OrthoDB" id="9797833at2"/>
<dbReference type="Proteomes" id="UP000000256">
    <property type="component" value="Chromosome"/>
</dbReference>
<dbReference type="GO" id="GO:0005737">
    <property type="term" value="C:cytoplasm"/>
    <property type="evidence" value="ECO:0007669"/>
    <property type="project" value="UniProtKB-ARBA"/>
</dbReference>
<dbReference type="GO" id="GO:0015935">
    <property type="term" value="C:small ribosomal subunit"/>
    <property type="evidence" value="ECO:0007669"/>
    <property type="project" value="InterPro"/>
</dbReference>
<dbReference type="GO" id="GO:0019843">
    <property type="term" value="F:rRNA binding"/>
    <property type="evidence" value="ECO:0007669"/>
    <property type="project" value="UniProtKB-UniRule"/>
</dbReference>
<dbReference type="GO" id="GO:0003735">
    <property type="term" value="F:structural constituent of ribosome"/>
    <property type="evidence" value="ECO:0007669"/>
    <property type="project" value="InterPro"/>
</dbReference>
<dbReference type="GO" id="GO:0000028">
    <property type="term" value="P:ribosomal small subunit assembly"/>
    <property type="evidence" value="ECO:0007669"/>
    <property type="project" value="TreeGrafter"/>
</dbReference>
<dbReference type="GO" id="GO:0006412">
    <property type="term" value="P:translation"/>
    <property type="evidence" value="ECO:0007669"/>
    <property type="project" value="UniProtKB-UniRule"/>
</dbReference>
<dbReference type="FunFam" id="3.30.860.10:FF:000001">
    <property type="entry name" value="30S ribosomal protein S19"/>
    <property type="match status" value="1"/>
</dbReference>
<dbReference type="Gene3D" id="3.30.860.10">
    <property type="entry name" value="30s Ribosomal Protein S19, Chain A"/>
    <property type="match status" value="1"/>
</dbReference>
<dbReference type="HAMAP" id="MF_00531">
    <property type="entry name" value="Ribosomal_uS19"/>
    <property type="match status" value="1"/>
</dbReference>
<dbReference type="InterPro" id="IPR002222">
    <property type="entry name" value="Ribosomal_uS19"/>
</dbReference>
<dbReference type="InterPro" id="IPR005732">
    <property type="entry name" value="Ribosomal_uS19_bac-type"/>
</dbReference>
<dbReference type="InterPro" id="IPR020934">
    <property type="entry name" value="Ribosomal_uS19_CS"/>
</dbReference>
<dbReference type="InterPro" id="IPR023575">
    <property type="entry name" value="Ribosomal_uS19_SF"/>
</dbReference>
<dbReference type="NCBIfam" id="TIGR01050">
    <property type="entry name" value="rpsS_bact"/>
    <property type="match status" value="1"/>
</dbReference>
<dbReference type="PANTHER" id="PTHR11880">
    <property type="entry name" value="RIBOSOMAL PROTEIN S19P FAMILY MEMBER"/>
    <property type="match status" value="1"/>
</dbReference>
<dbReference type="PANTHER" id="PTHR11880:SF8">
    <property type="entry name" value="SMALL RIBOSOMAL SUBUNIT PROTEIN US19M"/>
    <property type="match status" value="1"/>
</dbReference>
<dbReference type="Pfam" id="PF00203">
    <property type="entry name" value="Ribosomal_S19"/>
    <property type="match status" value="1"/>
</dbReference>
<dbReference type="PIRSF" id="PIRSF002144">
    <property type="entry name" value="Ribosomal_S19"/>
    <property type="match status" value="1"/>
</dbReference>
<dbReference type="PRINTS" id="PR00975">
    <property type="entry name" value="RIBOSOMALS19"/>
</dbReference>
<dbReference type="SUPFAM" id="SSF54570">
    <property type="entry name" value="Ribosomal protein S19"/>
    <property type="match status" value="1"/>
</dbReference>
<dbReference type="PROSITE" id="PS00323">
    <property type="entry name" value="RIBOSOMAL_S19"/>
    <property type="match status" value="1"/>
</dbReference>
<keyword id="KW-0687">Ribonucleoprotein</keyword>
<keyword id="KW-0689">Ribosomal protein</keyword>
<keyword id="KW-0694">RNA-binding</keyword>
<keyword id="KW-0699">rRNA-binding</keyword>
<comment type="function">
    <text evidence="1">Protein S19 forms a complex with S13 that binds strongly to the 16S ribosomal RNA.</text>
</comment>
<comment type="similarity">
    <text evidence="1">Belongs to the universal ribosomal protein uS19 family.</text>
</comment>
<sequence>MGRSLKKGPYCDPKLLKKIEKLNQNNEKKVIKTWSRRSTILPQMVGHTIAVYDGRKHVPVYITEEMVGHKLGEFAPTRTFKGHGHHTERSTALK</sequence>
<accession>A4XLS6</accession>
<proteinExistence type="inferred from homology"/>